<gene>
    <name type="primary">SAC9</name>
    <name type="synonym">CFS</name>
    <name type="ordered locus">At3g59770</name>
    <name type="ORF">F24G16.40</name>
</gene>
<proteinExistence type="evidence at protein level"/>
<keyword id="KW-0025">Alternative splicing</keyword>
<keyword id="KW-0378">Hydrolase</keyword>
<keyword id="KW-1185">Reference proteome</keyword>
<organism>
    <name type="scientific">Arabidopsis thaliana</name>
    <name type="common">Mouse-ear cress</name>
    <dbReference type="NCBI Taxonomy" id="3702"/>
    <lineage>
        <taxon>Eukaryota</taxon>
        <taxon>Viridiplantae</taxon>
        <taxon>Streptophyta</taxon>
        <taxon>Embryophyta</taxon>
        <taxon>Tracheophyta</taxon>
        <taxon>Spermatophyta</taxon>
        <taxon>Magnoliopsida</taxon>
        <taxon>eudicotyledons</taxon>
        <taxon>Gunneridae</taxon>
        <taxon>Pentapetalae</taxon>
        <taxon>rosids</taxon>
        <taxon>malvids</taxon>
        <taxon>Brassicales</taxon>
        <taxon>Brassicaceae</taxon>
        <taxon>Camelineae</taxon>
        <taxon>Arabidopsis</taxon>
    </lineage>
</organism>
<accession>Q7XZU0</accession>
<accession>Q0WUS3</accession>
<accession>Q9M1Z7</accession>
<sequence>MDLHPPGGSKKTSVVVVTLDTGEVYVIASLLSKADTQVIYIDPTTGILRYNGKPGLDNFKSEREALDYITNGSRGGVRSSVYARAILGYAVLGSFGMLLVATRLNPSIPDLPGGGCVYTVAESQWVKIPLYNPQPQGKGETKNIQELTELDIDGKHYFCDTRDITRPFPSRMPLQSPDDEFVWNRWLSVPFKNIGLPEHCVILLQGFAEYRPFGSSGQLEGIVALMARRSRLHPGTRYLARGINSCSGTGNEVECEQLVWIPKRNGQSIAFNSYIWRRGTIPIWWGAELKMTAAEAEIYVADRDPYKGSTEYYQRLSKRYDTRNLDAPVGENQKKKAFVPIVCVNLLRSGEGKSECILVQHFEESMNFIKSSGKLPYTRVHLINYDWHASVKLKGEQQTIEGLWMYLKSPTMAIGISEGDYLPSRQRLKDCRGEVICIDDIEGAFCLRSHQNGVIRFNCADSLDRTNAASFFGGLQVFVEQCRRLGISLDTDLGYGHNSVNNQGGYNAPLPPGWEKRADAVTGKSYYIDHNTKTTTWSHPCPDKPWKRLDMRFEEFKRSTILSPVSELADLFLQQGDIHATLYTGSKAMHSQILNIFSEESGAFKQFSAAQKNMKITLQRRYKNAMVDSSRQKQLEMFLGMRLFKHLPSIPVQPLHVLSRPSGFFLKPVPNMSESSNDGSSLLSIKRKDITWLCPQAADIVELFIYLSEPCHVCQLLLTISHGADDLTCPSTVDVRTGRHIEDLKLVVEGASIPRCANGTNLLVPLPGPISSEDMAVTGAGARLHEKDTSSLSLLYDFEELEGQLDFLTRVVAVTFYPAGAVRIPMTLGQIEVLGISLPWKGMFTCERTGGRLAELARKPDEDGSPFSSCSDLNPFAATTSLQAETVSTPVQQKDPFPSNLLDLLTGEDSSSDPFPQPVVECIASGGNDMLDFLDEAVVEYRGSDTVPDGSVPQNKRPKDSGAHLYLNCLKSLAGPNMAKKLEFVEAMKLEIERLRLNISAAERDRALLSIGIDPATINPNSSYDELYIGRLCKIANALAVMGQASLEDKIIASIGLEKLENNVIDFWNITRIGEGCDGGMCQVRAEVNKSPVGSSTKSSRGESGSVFLCFQCMKKACKFCCAGKGALLLSKSYSRDTANGGGSLADVSATSIGSDHYICKKCCSSIVLEALIVDYVRVMVSLRRSGRVDNAGREALNEVFGSNITNHLAVRGQPSPNREDFNFLRQILGKEESLSEFPFASFLHKVETATDSAPFFSLLTPLNLASSNAYWKAPPSADSVEAAIVLNTLSDVSSVILLVSPCGYSDADAPTVQIWASSDINKEARTLMGKWDVQSFIRSSPELSGSEKSGRAPRHIKFAFKNPVRCRIIWITLRLPRLGSSSSVSLDKNINLLSLDENPFAPIPRRASFGATIENDPCIHAKHILVTGNTVRDKTLQSVESMSVRNWLDRAPRLNRFLIPLETERPMENDLVLELYLQPASPLAAGFRLDAFSAIKPRVTHSPSSDVVDIWDPTSVIMEDRHVSPAILYIQVSVLQEQYKMVTIAEYRLPEARDGTKLYFDFPKQIQAQRVSFKLLGDVAAFTDEPAEAVDLSSRASPFAAGLSLANRIKLYYYADPYEVGKWTSLSSV</sequence>
<dbReference type="EC" id="3.1.3.-"/>
<dbReference type="EMBL" id="AY227252">
    <property type="protein sequence ID" value="AAP49842.1"/>
    <property type="molecule type" value="mRNA"/>
</dbReference>
<dbReference type="EMBL" id="AL138647">
    <property type="protein sequence ID" value="CAB75796.1"/>
    <property type="status" value="ALT_SEQ"/>
    <property type="molecule type" value="Genomic_DNA"/>
</dbReference>
<dbReference type="EMBL" id="CP002686">
    <property type="protein sequence ID" value="AEE79965.1"/>
    <property type="molecule type" value="Genomic_DNA"/>
</dbReference>
<dbReference type="EMBL" id="AK227068">
    <property type="protein sequence ID" value="BAE99125.1"/>
    <property type="molecule type" value="mRNA"/>
</dbReference>
<dbReference type="PIR" id="T47801">
    <property type="entry name" value="T47801"/>
</dbReference>
<dbReference type="RefSeq" id="NP_191536.2">
    <molecule id="Q7XZU0-1"/>
    <property type="nucleotide sequence ID" value="NM_115839.4"/>
</dbReference>
<dbReference type="SMR" id="Q7XZU0"/>
<dbReference type="BioGRID" id="10460">
    <property type="interactions" value="1"/>
</dbReference>
<dbReference type="FunCoup" id="Q7XZU0">
    <property type="interactions" value="1884"/>
</dbReference>
<dbReference type="STRING" id="3702.Q7XZU0"/>
<dbReference type="GlyGen" id="Q7XZU0">
    <property type="glycosylation" value="1 site"/>
</dbReference>
<dbReference type="iPTMnet" id="Q7XZU0"/>
<dbReference type="PaxDb" id="3702-AT3G59770.3"/>
<dbReference type="ProteomicsDB" id="226642">
    <molecule id="Q7XZU0-1"/>
</dbReference>
<dbReference type="EnsemblPlants" id="AT3G59770.1">
    <molecule id="Q7XZU0-1"/>
    <property type="protein sequence ID" value="AT3G59770.1"/>
    <property type="gene ID" value="AT3G59770"/>
</dbReference>
<dbReference type="GeneID" id="825146"/>
<dbReference type="Gramene" id="AT3G59770.1">
    <molecule id="Q7XZU0-1"/>
    <property type="protein sequence ID" value="AT3G59770.1"/>
    <property type="gene ID" value="AT3G59770"/>
</dbReference>
<dbReference type="KEGG" id="ath:AT3G59770"/>
<dbReference type="Araport" id="AT3G59770"/>
<dbReference type="TAIR" id="AT3G59770">
    <property type="gene designation" value="SAC9"/>
</dbReference>
<dbReference type="eggNOG" id="KOG1888">
    <property type="taxonomic scope" value="Eukaryota"/>
</dbReference>
<dbReference type="InParanoid" id="Q7XZU0"/>
<dbReference type="PhylomeDB" id="Q7XZU0"/>
<dbReference type="PRO" id="PR:Q7XZU0"/>
<dbReference type="Proteomes" id="UP000006548">
    <property type="component" value="Chromosome 3"/>
</dbReference>
<dbReference type="ExpressionAtlas" id="Q7XZU0">
    <property type="expression patterns" value="baseline and differential"/>
</dbReference>
<dbReference type="GO" id="GO:0016791">
    <property type="term" value="F:phosphatase activity"/>
    <property type="evidence" value="ECO:0007669"/>
    <property type="project" value="InterPro"/>
</dbReference>
<dbReference type="CDD" id="cd00201">
    <property type="entry name" value="WW"/>
    <property type="match status" value="1"/>
</dbReference>
<dbReference type="Gene3D" id="2.20.70.10">
    <property type="match status" value="1"/>
</dbReference>
<dbReference type="InterPro" id="IPR002013">
    <property type="entry name" value="SAC_dom"/>
</dbReference>
<dbReference type="InterPro" id="IPR001202">
    <property type="entry name" value="WW_dom"/>
</dbReference>
<dbReference type="InterPro" id="IPR036020">
    <property type="entry name" value="WW_dom_sf"/>
</dbReference>
<dbReference type="PANTHER" id="PTHR46817">
    <property type="entry name" value="PHOSPHOINOSITIDE PHOSPHATASE SAC9-RELATED"/>
    <property type="match status" value="1"/>
</dbReference>
<dbReference type="PANTHER" id="PTHR46817:SF1">
    <property type="entry name" value="SAC DOMAIN-CONTAINING PROTEIN"/>
    <property type="match status" value="1"/>
</dbReference>
<dbReference type="Pfam" id="PF24765">
    <property type="entry name" value="SAC9_C"/>
    <property type="match status" value="1"/>
</dbReference>
<dbReference type="Pfam" id="PF24791">
    <property type="entry name" value="SAC9_C8D"/>
    <property type="match status" value="1"/>
</dbReference>
<dbReference type="Pfam" id="PF24790">
    <property type="entry name" value="SAC9_GBDL_1st"/>
    <property type="match status" value="1"/>
</dbReference>
<dbReference type="Pfam" id="PF24789">
    <property type="entry name" value="SAC9_GBDL_2nd"/>
    <property type="match status" value="1"/>
</dbReference>
<dbReference type="Pfam" id="PF02383">
    <property type="entry name" value="Syja_N"/>
    <property type="match status" value="1"/>
</dbReference>
<dbReference type="Pfam" id="PF00397">
    <property type="entry name" value="WW"/>
    <property type="match status" value="1"/>
</dbReference>
<dbReference type="SMART" id="SM00456">
    <property type="entry name" value="WW"/>
    <property type="match status" value="1"/>
</dbReference>
<dbReference type="SUPFAM" id="SSF51045">
    <property type="entry name" value="WW domain"/>
    <property type="match status" value="1"/>
</dbReference>
<dbReference type="PROSITE" id="PS50275">
    <property type="entry name" value="SAC"/>
    <property type="match status" value="1"/>
</dbReference>
<dbReference type="PROSITE" id="PS01159">
    <property type="entry name" value="WW_DOMAIN_1"/>
    <property type="match status" value="1"/>
</dbReference>
<dbReference type="PROSITE" id="PS50020">
    <property type="entry name" value="WW_DOMAIN_2"/>
    <property type="match status" value="1"/>
</dbReference>
<comment type="function">
    <text evidence="5">Probable phosphoinositide phosphatase that could be involved in stress signaling.</text>
</comment>
<comment type="alternative products">
    <event type="alternative splicing"/>
    <isoform>
        <id>Q7XZU0-1</id>
        <name>1</name>
        <sequence type="displayed"/>
    </isoform>
    <text>A number of isoforms are produced. According to EST sequences.</text>
</comment>
<comment type="tissue specificity">
    <text evidence="4 5">Ubiquitous. Most abundant in the roots with lower expression levels throughout the leaves and shoot.</text>
</comment>
<comment type="domain">
    <text evidence="1">The phosphatase catalytic core motif (or RXNCXDCLDRTN motif) from the SAC domain is found in metal-independent protein phosphatases and inositol polyphosphate phosphatases.</text>
</comment>
<comment type="disruption phenotype">
    <text evidence="5 6 7">Characteristics of a constitutive stress response, including dwarfism, closed stomata, and accumulation of anthocyanin and reactive-oxygen species. Accumulates elevated levels of PtdIns(4,5)P(2) and Ins(1,4,5)P(3) in roots. Hypersensitivity to salt stress. Late flowering, shorter roots with less lateral branching and low fertility. Abnormalities of cell wall and membrane structures in primary root cells.</text>
</comment>
<comment type="sequence caution" evidence="8">
    <conflict type="erroneous gene model prediction">
        <sequence resource="EMBL-CDS" id="CAB75796"/>
    </conflict>
</comment>
<reference key="1">
    <citation type="journal article" date="2003" name="Plant Physiol.">
        <title>The SAC domain-containing protein gene family in Arabidopsis.</title>
        <authorList>
            <person name="Zhong R."/>
            <person name="Ye Z.-H."/>
        </authorList>
    </citation>
    <scope>NUCLEOTIDE SEQUENCE [MRNA]</scope>
    <scope>GENE FAMILY</scope>
    <scope>DOMAIN</scope>
    <scope>TISSUE SPECIFICITY</scope>
</reference>
<reference key="2">
    <citation type="journal article" date="2000" name="Nature">
        <title>Sequence and analysis of chromosome 3 of the plant Arabidopsis thaliana.</title>
        <authorList>
            <person name="Salanoubat M."/>
            <person name="Lemcke K."/>
            <person name="Rieger M."/>
            <person name="Ansorge W."/>
            <person name="Unseld M."/>
            <person name="Fartmann B."/>
            <person name="Valle G."/>
            <person name="Bloecker H."/>
            <person name="Perez-Alonso M."/>
            <person name="Obermaier B."/>
            <person name="Delseny M."/>
            <person name="Boutry M."/>
            <person name="Grivell L.A."/>
            <person name="Mache R."/>
            <person name="Puigdomenech P."/>
            <person name="De Simone V."/>
            <person name="Choisne N."/>
            <person name="Artiguenave F."/>
            <person name="Robert C."/>
            <person name="Brottier P."/>
            <person name="Wincker P."/>
            <person name="Cattolico L."/>
            <person name="Weissenbach J."/>
            <person name="Saurin W."/>
            <person name="Quetier F."/>
            <person name="Schaefer M."/>
            <person name="Mueller-Auer S."/>
            <person name="Gabel C."/>
            <person name="Fuchs M."/>
            <person name="Benes V."/>
            <person name="Wurmbach E."/>
            <person name="Drzonek H."/>
            <person name="Erfle H."/>
            <person name="Jordan N."/>
            <person name="Bangert S."/>
            <person name="Wiedelmann R."/>
            <person name="Kranz H."/>
            <person name="Voss H."/>
            <person name="Holland R."/>
            <person name="Brandt P."/>
            <person name="Nyakatura G."/>
            <person name="Vezzi A."/>
            <person name="D'Angelo M."/>
            <person name="Pallavicini A."/>
            <person name="Toppo S."/>
            <person name="Simionati B."/>
            <person name="Conrad A."/>
            <person name="Hornischer K."/>
            <person name="Kauer G."/>
            <person name="Loehnert T.-H."/>
            <person name="Nordsiek G."/>
            <person name="Reichelt J."/>
            <person name="Scharfe M."/>
            <person name="Schoen O."/>
            <person name="Bargues M."/>
            <person name="Terol J."/>
            <person name="Climent J."/>
            <person name="Navarro P."/>
            <person name="Collado C."/>
            <person name="Perez-Perez A."/>
            <person name="Ottenwaelder B."/>
            <person name="Duchemin D."/>
            <person name="Cooke R."/>
            <person name="Laudie M."/>
            <person name="Berger-Llauro C."/>
            <person name="Purnelle B."/>
            <person name="Masuy D."/>
            <person name="de Haan M."/>
            <person name="Maarse A.C."/>
            <person name="Alcaraz J.-P."/>
            <person name="Cottet A."/>
            <person name="Casacuberta E."/>
            <person name="Monfort A."/>
            <person name="Argiriou A."/>
            <person name="Flores M."/>
            <person name="Liguori R."/>
            <person name="Vitale D."/>
            <person name="Mannhaupt G."/>
            <person name="Haase D."/>
            <person name="Schoof H."/>
            <person name="Rudd S."/>
            <person name="Zaccaria P."/>
            <person name="Mewes H.-W."/>
            <person name="Mayer K.F.X."/>
            <person name="Kaul S."/>
            <person name="Town C.D."/>
            <person name="Koo H.L."/>
            <person name="Tallon L.J."/>
            <person name="Jenkins J."/>
            <person name="Rooney T."/>
            <person name="Rizzo M."/>
            <person name="Walts A."/>
            <person name="Utterback T."/>
            <person name="Fujii C.Y."/>
            <person name="Shea T.P."/>
            <person name="Creasy T.H."/>
            <person name="Haas B."/>
            <person name="Maiti R."/>
            <person name="Wu D."/>
            <person name="Peterson J."/>
            <person name="Van Aken S."/>
            <person name="Pai G."/>
            <person name="Militscher J."/>
            <person name="Sellers P."/>
            <person name="Gill J.E."/>
            <person name="Feldblyum T.V."/>
            <person name="Preuss D."/>
            <person name="Lin X."/>
            <person name="Nierman W.C."/>
            <person name="Salzberg S.L."/>
            <person name="White O."/>
            <person name="Venter J.C."/>
            <person name="Fraser C.M."/>
            <person name="Kaneko T."/>
            <person name="Nakamura Y."/>
            <person name="Sato S."/>
            <person name="Kato T."/>
            <person name="Asamizu E."/>
            <person name="Sasamoto S."/>
            <person name="Kimura T."/>
            <person name="Idesawa K."/>
            <person name="Kawashima K."/>
            <person name="Kishida Y."/>
            <person name="Kiyokawa C."/>
            <person name="Kohara M."/>
            <person name="Matsumoto M."/>
            <person name="Matsuno A."/>
            <person name="Muraki A."/>
            <person name="Nakayama S."/>
            <person name="Nakazaki N."/>
            <person name="Shinpo S."/>
            <person name="Takeuchi C."/>
            <person name="Wada T."/>
            <person name="Watanabe A."/>
            <person name="Yamada M."/>
            <person name="Yasuda M."/>
            <person name="Tabata S."/>
        </authorList>
    </citation>
    <scope>NUCLEOTIDE SEQUENCE [LARGE SCALE GENOMIC DNA]</scope>
    <source>
        <strain>cv. Columbia</strain>
    </source>
</reference>
<reference key="3">
    <citation type="journal article" date="2017" name="Plant J.">
        <title>Araport11: a complete reannotation of the Arabidopsis thaliana reference genome.</title>
        <authorList>
            <person name="Cheng C.Y."/>
            <person name="Krishnakumar V."/>
            <person name="Chan A.P."/>
            <person name="Thibaud-Nissen F."/>
            <person name="Schobel S."/>
            <person name="Town C.D."/>
        </authorList>
    </citation>
    <scope>GENOME REANNOTATION</scope>
    <source>
        <strain>cv. Columbia</strain>
    </source>
</reference>
<reference key="4">
    <citation type="submission" date="2006-07" db="EMBL/GenBank/DDBJ databases">
        <title>Large-scale analysis of RIKEN Arabidopsis full-length (RAFL) cDNAs.</title>
        <authorList>
            <person name="Totoki Y."/>
            <person name="Seki M."/>
            <person name="Ishida J."/>
            <person name="Nakajima M."/>
            <person name="Enju A."/>
            <person name="Kamiya A."/>
            <person name="Narusaka M."/>
            <person name="Shin-i T."/>
            <person name="Nakagawa M."/>
            <person name="Sakamoto N."/>
            <person name="Oishi K."/>
            <person name="Kohara Y."/>
            <person name="Kobayashi M."/>
            <person name="Toyoda A."/>
            <person name="Sakaki Y."/>
            <person name="Sakurai T."/>
            <person name="Iida K."/>
            <person name="Akiyama K."/>
            <person name="Satou M."/>
            <person name="Toyoda T."/>
            <person name="Konagaya A."/>
            <person name="Carninci P."/>
            <person name="Kawai J."/>
            <person name="Hayashizaki Y."/>
            <person name="Shinozaki K."/>
        </authorList>
    </citation>
    <scope>NUCLEOTIDE SEQUENCE [LARGE SCALE MRNA]</scope>
    <source>
        <strain>cv. Columbia</strain>
    </source>
</reference>
<reference key="5">
    <citation type="journal article" date="2005" name="Plant Physiol.">
        <title>Mutations in the Arabidopsis phosphoinositide phosphatase gene SAC9 lead to overaccumulation of PtdIns(4,5)P2 and constitutive expression of the stress-response pathway.</title>
        <authorList>
            <person name="Williams M.E."/>
            <person name="Torabinejad J."/>
            <person name="Cohick E."/>
            <person name="Parker K."/>
            <person name="Drake E.J."/>
            <person name="Thompson J.E."/>
            <person name="Hortter M."/>
            <person name="Dewald D.B."/>
        </authorList>
    </citation>
    <scope>DISRUPTION PHENOTYPE</scope>
    <scope>FUNCTION</scope>
    <scope>TISSUE SPECIFICITY</scope>
</reference>
<reference key="6">
    <citation type="journal article" date="2006" name="Photosyn. Res.">
        <title>Slow dark deactivation of Arabidopsis chloroplast ATP synthase caused by a mutation in a nonplastidic SAC domain protein.</title>
        <authorList>
            <person name="Gong P."/>
            <person name="Wu G."/>
            <person name="Ort D.R."/>
        </authorList>
    </citation>
    <scope>DISRUPTION PHENOTYPE</scope>
</reference>
<reference key="7">
    <citation type="journal article" date="2009" name="Plant Physiol.">
        <title>Large-scale Arabidopsis phosphoproteome profiling reveals novel chloroplast kinase substrates and phosphorylation networks.</title>
        <authorList>
            <person name="Reiland S."/>
            <person name="Messerli G."/>
            <person name="Baerenfaller K."/>
            <person name="Gerrits B."/>
            <person name="Endler A."/>
            <person name="Grossmann J."/>
            <person name="Gruissem W."/>
            <person name="Baginsky S."/>
        </authorList>
    </citation>
    <scope>IDENTIFICATION BY MASS SPECTROMETRY [LARGE SCALE ANALYSIS]</scope>
</reference>
<reference key="8">
    <citation type="journal article" date="2011" name="Planta">
        <title>Unique cell wall abnormalities in the putative phosphoinositide phosphatase mutant AtSAC9.</title>
        <authorList>
            <person name="Vollmer A.H."/>
            <person name="Youssef N.N."/>
            <person name="DeWald D.B."/>
        </authorList>
    </citation>
    <scope>DISRUPTION PHENOTYPE</scope>
</reference>
<feature type="chain" id="PRO_0000421975" description="Probable phosphoinositide phosphatase SAC9">
    <location>
        <begin position="1"/>
        <end position="1630"/>
    </location>
</feature>
<feature type="domain" description="SAC" evidence="2">
    <location>
        <begin position="147"/>
        <end position="527"/>
    </location>
</feature>
<feature type="domain" description="WW" evidence="3">
    <location>
        <begin position="508"/>
        <end position="542"/>
    </location>
</feature>
<feature type="short sequence motif" description="Phosphatase catalytic core; degenerate">
    <location>
        <begin position="456"/>
        <end position="467"/>
    </location>
</feature>
<feature type="sequence conflict" description="In Ref. 4; BAE99125." evidence="8" ref="4">
    <original>R</original>
    <variation>G</variation>
    <location>
        <position position="315"/>
    </location>
</feature>
<name>SAC9_ARATH</name>
<evidence type="ECO:0000250" key="1"/>
<evidence type="ECO:0000255" key="2">
    <source>
        <dbReference type="PROSITE-ProRule" id="PRU00183"/>
    </source>
</evidence>
<evidence type="ECO:0000255" key="3">
    <source>
        <dbReference type="PROSITE-ProRule" id="PRU00224"/>
    </source>
</evidence>
<evidence type="ECO:0000269" key="4">
    <source>
    </source>
</evidence>
<evidence type="ECO:0000269" key="5">
    <source>
    </source>
</evidence>
<evidence type="ECO:0000269" key="6">
    <source>
    </source>
</evidence>
<evidence type="ECO:0000269" key="7">
    <source>
    </source>
</evidence>
<evidence type="ECO:0000305" key="8"/>
<protein>
    <recommendedName>
        <fullName>Probable phosphoinositide phosphatase SAC9</fullName>
        <shortName>AtSAC9</shortName>
        <ecNumber>3.1.3.-</ecNumber>
    </recommendedName>
    <alternativeName>
        <fullName>Protein SUPPRESSOR OF ACTIN 9</fullName>
    </alternativeName>
    <alternativeName>
        <fullName>SAC domain protein 9</fullName>
    </alternativeName>
</protein>